<accession>B3EQD1</accession>
<evidence type="ECO:0000255" key="1">
    <source>
        <dbReference type="HAMAP-Rule" id="MF_00145"/>
    </source>
</evidence>
<keyword id="KW-0067">ATP-binding</keyword>
<keyword id="KW-0963">Cytoplasm</keyword>
<keyword id="KW-0324">Glycolysis</keyword>
<keyword id="KW-0418">Kinase</keyword>
<keyword id="KW-0547">Nucleotide-binding</keyword>
<keyword id="KW-0808">Transferase</keyword>
<reference key="1">
    <citation type="submission" date="2008-06" db="EMBL/GenBank/DDBJ databases">
        <title>Complete sequence of Chlorobium phaeobacteroides BS1.</title>
        <authorList>
            <consortium name="US DOE Joint Genome Institute"/>
            <person name="Lucas S."/>
            <person name="Copeland A."/>
            <person name="Lapidus A."/>
            <person name="Glavina del Rio T."/>
            <person name="Dalin E."/>
            <person name="Tice H."/>
            <person name="Bruce D."/>
            <person name="Goodwin L."/>
            <person name="Pitluck S."/>
            <person name="Schmutz J."/>
            <person name="Larimer F."/>
            <person name="Land M."/>
            <person name="Hauser L."/>
            <person name="Kyrpides N."/>
            <person name="Ovchinnikova G."/>
            <person name="Li T."/>
            <person name="Liu Z."/>
            <person name="Zhao F."/>
            <person name="Overmann J."/>
            <person name="Bryant D.A."/>
            <person name="Richardson P."/>
        </authorList>
    </citation>
    <scope>NUCLEOTIDE SEQUENCE [LARGE SCALE GENOMIC DNA]</scope>
    <source>
        <strain>BS1</strain>
    </source>
</reference>
<organism>
    <name type="scientific">Chlorobium phaeobacteroides (strain BS1)</name>
    <dbReference type="NCBI Taxonomy" id="331678"/>
    <lineage>
        <taxon>Bacteria</taxon>
        <taxon>Pseudomonadati</taxon>
        <taxon>Chlorobiota</taxon>
        <taxon>Chlorobiia</taxon>
        <taxon>Chlorobiales</taxon>
        <taxon>Chlorobiaceae</taxon>
        <taxon>Chlorobium/Pelodictyon group</taxon>
        <taxon>Chlorobium</taxon>
    </lineage>
</organism>
<comment type="catalytic activity">
    <reaction evidence="1">
        <text>(2R)-3-phosphoglycerate + ATP = (2R)-3-phospho-glyceroyl phosphate + ADP</text>
        <dbReference type="Rhea" id="RHEA:14801"/>
        <dbReference type="ChEBI" id="CHEBI:30616"/>
        <dbReference type="ChEBI" id="CHEBI:57604"/>
        <dbReference type="ChEBI" id="CHEBI:58272"/>
        <dbReference type="ChEBI" id="CHEBI:456216"/>
        <dbReference type="EC" id="2.7.2.3"/>
    </reaction>
</comment>
<comment type="pathway">
    <text evidence="1">Carbohydrate degradation; glycolysis; pyruvate from D-glyceraldehyde 3-phosphate: step 2/5.</text>
</comment>
<comment type="subunit">
    <text evidence="1">Monomer.</text>
</comment>
<comment type="subcellular location">
    <subcellularLocation>
        <location evidence="1">Cytoplasm</location>
    </subcellularLocation>
</comment>
<comment type="similarity">
    <text evidence="1">Belongs to the phosphoglycerate kinase family.</text>
</comment>
<dbReference type="EC" id="2.7.2.3" evidence="1"/>
<dbReference type="EMBL" id="CP001101">
    <property type="protein sequence ID" value="ACE05429.1"/>
    <property type="molecule type" value="Genomic_DNA"/>
</dbReference>
<dbReference type="SMR" id="B3EQD1"/>
<dbReference type="STRING" id="331678.Cphamn1_2535"/>
<dbReference type="KEGG" id="cpb:Cphamn1_2535"/>
<dbReference type="eggNOG" id="COG0126">
    <property type="taxonomic scope" value="Bacteria"/>
</dbReference>
<dbReference type="HOGENOM" id="CLU_025427_0_2_10"/>
<dbReference type="OrthoDB" id="9808460at2"/>
<dbReference type="UniPathway" id="UPA00109">
    <property type="reaction ID" value="UER00185"/>
</dbReference>
<dbReference type="GO" id="GO:0005829">
    <property type="term" value="C:cytosol"/>
    <property type="evidence" value="ECO:0007669"/>
    <property type="project" value="TreeGrafter"/>
</dbReference>
<dbReference type="GO" id="GO:0043531">
    <property type="term" value="F:ADP binding"/>
    <property type="evidence" value="ECO:0007669"/>
    <property type="project" value="TreeGrafter"/>
</dbReference>
<dbReference type="GO" id="GO:0005524">
    <property type="term" value="F:ATP binding"/>
    <property type="evidence" value="ECO:0007669"/>
    <property type="project" value="UniProtKB-KW"/>
</dbReference>
<dbReference type="GO" id="GO:0004618">
    <property type="term" value="F:phosphoglycerate kinase activity"/>
    <property type="evidence" value="ECO:0007669"/>
    <property type="project" value="UniProtKB-UniRule"/>
</dbReference>
<dbReference type="GO" id="GO:0006094">
    <property type="term" value="P:gluconeogenesis"/>
    <property type="evidence" value="ECO:0007669"/>
    <property type="project" value="TreeGrafter"/>
</dbReference>
<dbReference type="GO" id="GO:0006096">
    <property type="term" value="P:glycolytic process"/>
    <property type="evidence" value="ECO:0007669"/>
    <property type="project" value="UniProtKB-UniRule"/>
</dbReference>
<dbReference type="CDD" id="cd00318">
    <property type="entry name" value="Phosphoglycerate_kinase"/>
    <property type="match status" value="1"/>
</dbReference>
<dbReference type="FunFam" id="3.40.50.1260:FF:000003">
    <property type="entry name" value="Phosphoglycerate kinase"/>
    <property type="match status" value="1"/>
</dbReference>
<dbReference type="FunFam" id="3.40.50.1260:FF:000006">
    <property type="entry name" value="Phosphoglycerate kinase"/>
    <property type="match status" value="1"/>
</dbReference>
<dbReference type="Gene3D" id="3.40.50.1260">
    <property type="entry name" value="Phosphoglycerate kinase, N-terminal domain"/>
    <property type="match status" value="2"/>
</dbReference>
<dbReference type="HAMAP" id="MF_00145">
    <property type="entry name" value="Phosphoglyc_kinase"/>
    <property type="match status" value="1"/>
</dbReference>
<dbReference type="InterPro" id="IPR001576">
    <property type="entry name" value="Phosphoglycerate_kinase"/>
</dbReference>
<dbReference type="InterPro" id="IPR015911">
    <property type="entry name" value="Phosphoglycerate_kinase_CS"/>
</dbReference>
<dbReference type="InterPro" id="IPR015824">
    <property type="entry name" value="Phosphoglycerate_kinase_N"/>
</dbReference>
<dbReference type="InterPro" id="IPR036043">
    <property type="entry name" value="Phosphoglycerate_kinase_sf"/>
</dbReference>
<dbReference type="PANTHER" id="PTHR11406">
    <property type="entry name" value="PHOSPHOGLYCERATE KINASE"/>
    <property type="match status" value="1"/>
</dbReference>
<dbReference type="PANTHER" id="PTHR11406:SF23">
    <property type="entry name" value="PHOSPHOGLYCERATE KINASE 1, CHLOROPLASTIC-RELATED"/>
    <property type="match status" value="1"/>
</dbReference>
<dbReference type="Pfam" id="PF00162">
    <property type="entry name" value="PGK"/>
    <property type="match status" value="1"/>
</dbReference>
<dbReference type="PIRSF" id="PIRSF000724">
    <property type="entry name" value="Pgk"/>
    <property type="match status" value="1"/>
</dbReference>
<dbReference type="PRINTS" id="PR00477">
    <property type="entry name" value="PHGLYCKINASE"/>
</dbReference>
<dbReference type="SUPFAM" id="SSF53748">
    <property type="entry name" value="Phosphoglycerate kinase"/>
    <property type="match status" value="1"/>
</dbReference>
<dbReference type="PROSITE" id="PS00111">
    <property type="entry name" value="PGLYCERATE_KINASE"/>
    <property type="match status" value="1"/>
</dbReference>
<protein>
    <recommendedName>
        <fullName evidence="1">Phosphoglycerate kinase</fullName>
        <ecNumber evidence="1">2.7.2.3</ecNumber>
    </recommendedName>
</protein>
<proteinExistence type="inferred from homology"/>
<sequence>MEKKSLYDISCKGSRVLMRVDFNVPLDEHAHITNDKRIIEALPSIHKIIEDGGRLILMSHLGRPKGKVVPELSLEPVAKRLSELLDTSVVMAGDCIGTEAMQQALALQDGEIMLLENLRFHPEEEKNDPEFARELASMGEIYVNDAFGTAHRAHASTEGICHYVQPSVAGFLIEKELKYLGQALNNPERPFVAILGGAKISGKIDVLENLFNKVDTVLIGGAMIFTFFKAQGLSVGKSLVEDDKVELARHLLQTAKERKINMLLPEDVIAASEFSGDAETMAVPVGGIPENMMGLDIGPKTIDTFSREILAAKTVVWNGPMGVFEIEPFAKGTIAIAQALADATAKGTISIVGGGDSAAAVMKAGLASGITHISTGGGASLEFLEGKELPGITALND</sequence>
<gene>
    <name evidence="1" type="primary">pgk</name>
    <name type="ordered locus">Cphamn1_2535</name>
</gene>
<feature type="chain" id="PRO_1000096326" description="Phosphoglycerate kinase">
    <location>
        <begin position="1"/>
        <end position="397"/>
    </location>
</feature>
<feature type="binding site" evidence="1">
    <location>
        <begin position="21"/>
        <end position="23"/>
    </location>
    <ligand>
        <name>substrate</name>
    </ligand>
</feature>
<feature type="binding site" evidence="1">
    <location>
        <position position="37"/>
    </location>
    <ligand>
        <name>substrate</name>
    </ligand>
</feature>
<feature type="binding site" evidence="1">
    <location>
        <begin position="60"/>
        <end position="63"/>
    </location>
    <ligand>
        <name>substrate</name>
    </ligand>
</feature>
<feature type="binding site" evidence="1">
    <location>
        <position position="119"/>
    </location>
    <ligand>
        <name>substrate</name>
    </ligand>
</feature>
<feature type="binding site" evidence="1">
    <location>
        <position position="152"/>
    </location>
    <ligand>
        <name>substrate</name>
    </ligand>
</feature>
<feature type="binding site" evidence="1">
    <location>
        <position position="203"/>
    </location>
    <ligand>
        <name>ATP</name>
        <dbReference type="ChEBI" id="CHEBI:30616"/>
    </ligand>
</feature>
<feature type="binding site" evidence="1">
    <location>
        <position position="294"/>
    </location>
    <ligand>
        <name>ATP</name>
        <dbReference type="ChEBI" id="CHEBI:30616"/>
    </ligand>
</feature>
<feature type="binding site" evidence="1">
    <location>
        <position position="325"/>
    </location>
    <ligand>
        <name>ATP</name>
        <dbReference type="ChEBI" id="CHEBI:30616"/>
    </ligand>
</feature>
<feature type="binding site" evidence="1">
    <location>
        <begin position="354"/>
        <end position="357"/>
    </location>
    <ligand>
        <name>ATP</name>
        <dbReference type="ChEBI" id="CHEBI:30616"/>
    </ligand>
</feature>
<name>PGK_CHLPB</name>